<evidence type="ECO:0000255" key="1"/>
<evidence type="ECO:0000305" key="2"/>
<protein>
    <recommendedName>
        <fullName>UPF0319 protein YccT</fullName>
    </recommendedName>
</protein>
<sequence>MKTGIVTTLIALCLPVSVFATTLRLSTDVDLLVLDGKKVSSSLLRGADSIELDNGPHQLVFRVEKTIHLSNSEERLYISPPLVVSFNTQLINQVNFRLPRLENEREANHFDAAPRLELLDGDATPIPVKLDILAITSTAKTIDYEVEVERYNKSAKRASLPQFATMMADDSTLLSGVSELDAIPPQSQVLTEQRLKYWFKLADPQTRNTFLQWAEKQPSS</sequence>
<accession>P0A8X7</accession>
<accession>P75873</accession>
<keyword id="KW-1185">Reference proteome</keyword>
<keyword id="KW-0732">Signal</keyword>
<dbReference type="EMBL" id="AE005674">
    <property type="protein sequence ID" value="AAN42594.1"/>
    <property type="molecule type" value="Genomic_DNA"/>
</dbReference>
<dbReference type="EMBL" id="AE014073">
    <property type="protein sequence ID" value="AAP16480.1"/>
    <property type="molecule type" value="Genomic_DNA"/>
</dbReference>
<dbReference type="RefSeq" id="NP_706887.1">
    <property type="nucleotide sequence ID" value="NC_004337.2"/>
</dbReference>
<dbReference type="RefSeq" id="WP_000847791.1">
    <property type="nucleotide sequence ID" value="NZ_WPGW01000043.1"/>
</dbReference>
<dbReference type="STRING" id="198214.SF0966"/>
<dbReference type="PaxDb" id="198214-SF0966"/>
<dbReference type="GeneID" id="1023913"/>
<dbReference type="KEGG" id="sfl:SF0966"/>
<dbReference type="KEGG" id="sfx:S1032"/>
<dbReference type="PATRIC" id="fig|198214.7.peg.1124"/>
<dbReference type="HOGENOM" id="CLU_073782_2_0_6"/>
<dbReference type="Proteomes" id="UP000001006">
    <property type="component" value="Chromosome"/>
</dbReference>
<dbReference type="Proteomes" id="UP000002673">
    <property type="component" value="Chromosome"/>
</dbReference>
<dbReference type="HAMAP" id="MF_00789">
    <property type="entry name" value="UPF0319"/>
    <property type="match status" value="1"/>
</dbReference>
<dbReference type="InterPro" id="IPR018635">
    <property type="entry name" value="UPF0319"/>
</dbReference>
<dbReference type="NCBIfam" id="NF047712">
    <property type="entry name" value="CrliSynInhib"/>
    <property type="match status" value="1"/>
</dbReference>
<dbReference type="NCBIfam" id="NF002967">
    <property type="entry name" value="PRK03641.1"/>
    <property type="match status" value="1"/>
</dbReference>
<dbReference type="PANTHER" id="PTHR38108">
    <property type="entry name" value="UPF0319 PROTEIN YCCT"/>
    <property type="match status" value="1"/>
</dbReference>
<dbReference type="PANTHER" id="PTHR38108:SF1">
    <property type="entry name" value="UPF0319 PROTEIN YCCT"/>
    <property type="match status" value="1"/>
</dbReference>
<dbReference type="Pfam" id="PF09829">
    <property type="entry name" value="DUF2057"/>
    <property type="match status" value="1"/>
</dbReference>
<feature type="signal peptide" evidence="1">
    <location>
        <begin position="1"/>
        <end position="20"/>
    </location>
</feature>
<feature type="chain" id="PRO_0000036305" description="UPF0319 protein YccT">
    <location>
        <begin position="21"/>
        <end position="220"/>
    </location>
</feature>
<organism>
    <name type="scientific">Shigella flexneri</name>
    <dbReference type="NCBI Taxonomy" id="623"/>
    <lineage>
        <taxon>Bacteria</taxon>
        <taxon>Pseudomonadati</taxon>
        <taxon>Pseudomonadota</taxon>
        <taxon>Gammaproteobacteria</taxon>
        <taxon>Enterobacterales</taxon>
        <taxon>Enterobacteriaceae</taxon>
        <taxon>Shigella</taxon>
    </lineage>
</organism>
<gene>
    <name type="primary">yccT</name>
    <name type="ordered locus">SF0966</name>
    <name type="ordered locus">S1032</name>
</gene>
<comment type="similarity">
    <text evidence="2">Belongs to the UPF0319 family.</text>
</comment>
<proteinExistence type="inferred from homology"/>
<reference key="1">
    <citation type="journal article" date="2002" name="Nucleic Acids Res.">
        <title>Genome sequence of Shigella flexneri 2a: insights into pathogenicity through comparison with genomes of Escherichia coli K12 and O157.</title>
        <authorList>
            <person name="Jin Q."/>
            <person name="Yuan Z."/>
            <person name="Xu J."/>
            <person name="Wang Y."/>
            <person name="Shen Y."/>
            <person name="Lu W."/>
            <person name="Wang J."/>
            <person name="Liu H."/>
            <person name="Yang J."/>
            <person name="Yang F."/>
            <person name="Zhang X."/>
            <person name="Zhang J."/>
            <person name="Yang G."/>
            <person name="Wu H."/>
            <person name="Qu D."/>
            <person name="Dong J."/>
            <person name="Sun L."/>
            <person name="Xue Y."/>
            <person name="Zhao A."/>
            <person name="Gao Y."/>
            <person name="Zhu J."/>
            <person name="Kan B."/>
            <person name="Ding K."/>
            <person name="Chen S."/>
            <person name="Cheng H."/>
            <person name="Yao Z."/>
            <person name="He B."/>
            <person name="Chen R."/>
            <person name="Ma D."/>
            <person name="Qiang B."/>
            <person name="Wen Y."/>
            <person name="Hou Y."/>
            <person name="Yu J."/>
        </authorList>
    </citation>
    <scope>NUCLEOTIDE SEQUENCE [LARGE SCALE GENOMIC DNA]</scope>
    <source>
        <strain>301 / Serotype 2a</strain>
    </source>
</reference>
<reference key="2">
    <citation type="journal article" date="2003" name="Infect. Immun.">
        <title>Complete genome sequence and comparative genomics of Shigella flexneri serotype 2a strain 2457T.</title>
        <authorList>
            <person name="Wei J."/>
            <person name="Goldberg M.B."/>
            <person name="Burland V."/>
            <person name="Venkatesan M.M."/>
            <person name="Deng W."/>
            <person name="Fournier G."/>
            <person name="Mayhew G.F."/>
            <person name="Plunkett G. III"/>
            <person name="Rose D.J."/>
            <person name="Darling A."/>
            <person name="Mau B."/>
            <person name="Perna N.T."/>
            <person name="Payne S.M."/>
            <person name="Runyen-Janecky L.J."/>
            <person name="Zhou S."/>
            <person name="Schwartz D.C."/>
            <person name="Blattner F.R."/>
        </authorList>
    </citation>
    <scope>NUCLEOTIDE SEQUENCE [LARGE SCALE GENOMIC DNA]</scope>
    <source>
        <strain>ATCC 700930 / 2457T / Serotype 2a</strain>
    </source>
</reference>
<name>YCCT_SHIFL</name>